<keyword id="KW-0031">Aminopeptidase</keyword>
<keyword id="KW-0963">Cytoplasm</keyword>
<keyword id="KW-0378">Hydrolase</keyword>
<keyword id="KW-0464">Manganese</keyword>
<keyword id="KW-0479">Metal-binding</keyword>
<keyword id="KW-0645">Protease</keyword>
<comment type="function">
    <text evidence="1">Presumably involved in the processing and regular turnover of intracellular proteins. Catalyzes the removal of unsubstituted N-terminal amino acids from various peptides.</text>
</comment>
<comment type="catalytic activity">
    <reaction evidence="1">
        <text>Release of an N-terminal amino acid, Xaa-|-Yaa-, in which Xaa is preferably Leu, but may be other amino acids including Pro although not Arg or Lys, and Yaa may be Pro. Amino acid amides and methyl esters are also readily hydrolyzed, but rates on arylamides are exceedingly low.</text>
        <dbReference type="EC" id="3.4.11.1"/>
    </reaction>
</comment>
<comment type="catalytic activity">
    <reaction evidence="1">
        <text>Release of an N-terminal amino acid, preferentially leucine, but not glutamic or aspartic acids.</text>
        <dbReference type="EC" id="3.4.11.10"/>
    </reaction>
</comment>
<comment type="cofactor">
    <cofactor evidence="1">
        <name>Mn(2+)</name>
        <dbReference type="ChEBI" id="CHEBI:29035"/>
    </cofactor>
    <text evidence="1">Binds 2 manganese ions per subunit.</text>
</comment>
<comment type="subcellular location">
    <subcellularLocation>
        <location evidence="1">Cytoplasm</location>
    </subcellularLocation>
</comment>
<comment type="similarity">
    <text evidence="1">Belongs to the peptidase M17 family.</text>
</comment>
<evidence type="ECO:0000255" key="1">
    <source>
        <dbReference type="HAMAP-Rule" id="MF_00181"/>
    </source>
</evidence>
<protein>
    <recommendedName>
        <fullName evidence="1">Probable cytosol aminopeptidase</fullName>
        <ecNumber evidence="1">3.4.11.1</ecNumber>
    </recommendedName>
    <alternativeName>
        <fullName evidence="1">Leucine aminopeptidase</fullName>
        <shortName evidence="1">LAP</shortName>
        <ecNumber evidence="1">3.4.11.10</ecNumber>
    </alternativeName>
    <alternativeName>
        <fullName evidence="1">Leucyl aminopeptidase</fullName>
    </alternativeName>
</protein>
<reference key="1">
    <citation type="submission" date="2007-09" db="EMBL/GenBank/DDBJ databases">
        <title>Complete genome sequence of Rickettsia rickettsii.</title>
        <authorList>
            <person name="Madan A."/>
            <person name="Fahey J."/>
            <person name="Helton E."/>
            <person name="Ketteman M."/>
            <person name="Madan A."/>
            <person name="Rodrigues S."/>
            <person name="Sanchez A."/>
            <person name="Dasch G."/>
            <person name="Eremeeva M."/>
        </authorList>
    </citation>
    <scope>NUCLEOTIDE SEQUENCE [LARGE SCALE GENOMIC DNA]</scope>
    <source>
        <strain>Sheila Smith</strain>
    </source>
</reference>
<accession>A8GQW7</accession>
<organism>
    <name type="scientific">Rickettsia rickettsii (strain Sheila Smith)</name>
    <dbReference type="NCBI Taxonomy" id="392021"/>
    <lineage>
        <taxon>Bacteria</taxon>
        <taxon>Pseudomonadati</taxon>
        <taxon>Pseudomonadota</taxon>
        <taxon>Alphaproteobacteria</taxon>
        <taxon>Rickettsiales</taxon>
        <taxon>Rickettsiaceae</taxon>
        <taxon>Rickettsieae</taxon>
        <taxon>Rickettsia</taxon>
        <taxon>spotted fever group</taxon>
    </lineage>
</organism>
<proteinExistence type="inferred from homology"/>
<feature type="chain" id="PRO_1000019974" description="Probable cytosol aminopeptidase">
    <location>
        <begin position="1"/>
        <end position="500"/>
    </location>
</feature>
<feature type="active site" evidence="1">
    <location>
        <position position="277"/>
    </location>
</feature>
<feature type="active site" evidence="1">
    <location>
        <position position="351"/>
    </location>
</feature>
<feature type="binding site" evidence="1">
    <location>
        <position position="265"/>
    </location>
    <ligand>
        <name>Mn(2+)</name>
        <dbReference type="ChEBI" id="CHEBI:29035"/>
        <label>2</label>
    </ligand>
</feature>
<feature type="binding site" evidence="1">
    <location>
        <position position="270"/>
    </location>
    <ligand>
        <name>Mn(2+)</name>
        <dbReference type="ChEBI" id="CHEBI:29035"/>
        <label>1</label>
    </ligand>
</feature>
<feature type="binding site" evidence="1">
    <location>
        <position position="270"/>
    </location>
    <ligand>
        <name>Mn(2+)</name>
        <dbReference type="ChEBI" id="CHEBI:29035"/>
        <label>2</label>
    </ligand>
</feature>
<feature type="binding site" evidence="1">
    <location>
        <position position="288"/>
    </location>
    <ligand>
        <name>Mn(2+)</name>
        <dbReference type="ChEBI" id="CHEBI:29035"/>
        <label>2</label>
    </ligand>
</feature>
<feature type="binding site" evidence="1">
    <location>
        <position position="347"/>
    </location>
    <ligand>
        <name>Mn(2+)</name>
        <dbReference type="ChEBI" id="CHEBI:29035"/>
        <label>1</label>
    </ligand>
</feature>
<feature type="binding site" evidence="1">
    <location>
        <position position="349"/>
    </location>
    <ligand>
        <name>Mn(2+)</name>
        <dbReference type="ChEBI" id="CHEBI:29035"/>
        <label>1</label>
    </ligand>
</feature>
<feature type="binding site" evidence="1">
    <location>
        <position position="349"/>
    </location>
    <ligand>
        <name>Mn(2+)</name>
        <dbReference type="ChEBI" id="CHEBI:29035"/>
        <label>2</label>
    </ligand>
</feature>
<name>AMPA_RICRS</name>
<gene>
    <name evidence="1" type="primary">pepA</name>
    <name type="ordered locus">A1G_01050</name>
</gene>
<dbReference type="EC" id="3.4.11.1" evidence="1"/>
<dbReference type="EC" id="3.4.11.10" evidence="1"/>
<dbReference type="EMBL" id="CP000848">
    <property type="protein sequence ID" value="ABV75792.1"/>
    <property type="molecule type" value="Genomic_DNA"/>
</dbReference>
<dbReference type="RefSeq" id="WP_012150400.1">
    <property type="nucleotide sequence ID" value="NZ_CP121767.1"/>
</dbReference>
<dbReference type="SMR" id="A8GQW7"/>
<dbReference type="GeneID" id="79936976"/>
<dbReference type="KEGG" id="rri:A1G_01050"/>
<dbReference type="HOGENOM" id="CLU_013734_6_0_5"/>
<dbReference type="Proteomes" id="UP000006832">
    <property type="component" value="Chromosome"/>
</dbReference>
<dbReference type="GO" id="GO:0005737">
    <property type="term" value="C:cytoplasm"/>
    <property type="evidence" value="ECO:0007669"/>
    <property type="project" value="UniProtKB-SubCell"/>
</dbReference>
<dbReference type="GO" id="GO:0030145">
    <property type="term" value="F:manganese ion binding"/>
    <property type="evidence" value="ECO:0007669"/>
    <property type="project" value="UniProtKB-UniRule"/>
</dbReference>
<dbReference type="GO" id="GO:0070006">
    <property type="term" value="F:metalloaminopeptidase activity"/>
    <property type="evidence" value="ECO:0007669"/>
    <property type="project" value="InterPro"/>
</dbReference>
<dbReference type="GO" id="GO:0006508">
    <property type="term" value="P:proteolysis"/>
    <property type="evidence" value="ECO:0007669"/>
    <property type="project" value="UniProtKB-KW"/>
</dbReference>
<dbReference type="CDD" id="cd00433">
    <property type="entry name" value="Peptidase_M17"/>
    <property type="match status" value="1"/>
</dbReference>
<dbReference type="Gene3D" id="3.40.220.10">
    <property type="entry name" value="Leucine Aminopeptidase, subunit E, domain 1"/>
    <property type="match status" value="1"/>
</dbReference>
<dbReference type="Gene3D" id="3.40.630.10">
    <property type="entry name" value="Zn peptidases"/>
    <property type="match status" value="1"/>
</dbReference>
<dbReference type="HAMAP" id="MF_00181">
    <property type="entry name" value="Cytosol_peptidase_M17"/>
    <property type="match status" value="1"/>
</dbReference>
<dbReference type="InterPro" id="IPR011356">
    <property type="entry name" value="Leucine_aapep/pepB"/>
</dbReference>
<dbReference type="InterPro" id="IPR043472">
    <property type="entry name" value="Macro_dom-like"/>
</dbReference>
<dbReference type="InterPro" id="IPR000819">
    <property type="entry name" value="Peptidase_M17_C"/>
</dbReference>
<dbReference type="InterPro" id="IPR023042">
    <property type="entry name" value="Peptidase_M17_leu_NH2_pept"/>
</dbReference>
<dbReference type="InterPro" id="IPR008283">
    <property type="entry name" value="Peptidase_M17_N"/>
</dbReference>
<dbReference type="NCBIfam" id="NF002073">
    <property type="entry name" value="PRK00913.1-2"/>
    <property type="match status" value="1"/>
</dbReference>
<dbReference type="NCBIfam" id="NF002074">
    <property type="entry name" value="PRK00913.1-4"/>
    <property type="match status" value="1"/>
</dbReference>
<dbReference type="NCBIfam" id="NF002075">
    <property type="entry name" value="PRK00913.2-2"/>
    <property type="match status" value="1"/>
</dbReference>
<dbReference type="NCBIfam" id="NF002077">
    <property type="entry name" value="PRK00913.2-4"/>
    <property type="match status" value="1"/>
</dbReference>
<dbReference type="PANTHER" id="PTHR11963:SF23">
    <property type="entry name" value="CYTOSOL AMINOPEPTIDASE"/>
    <property type="match status" value="1"/>
</dbReference>
<dbReference type="PANTHER" id="PTHR11963">
    <property type="entry name" value="LEUCINE AMINOPEPTIDASE-RELATED"/>
    <property type="match status" value="1"/>
</dbReference>
<dbReference type="Pfam" id="PF00883">
    <property type="entry name" value="Peptidase_M17"/>
    <property type="match status" value="1"/>
</dbReference>
<dbReference type="Pfam" id="PF02789">
    <property type="entry name" value="Peptidase_M17_N"/>
    <property type="match status" value="1"/>
</dbReference>
<dbReference type="PRINTS" id="PR00481">
    <property type="entry name" value="LAMNOPPTDASE"/>
</dbReference>
<dbReference type="SUPFAM" id="SSF52949">
    <property type="entry name" value="Macro domain-like"/>
    <property type="match status" value="1"/>
</dbReference>
<dbReference type="SUPFAM" id="SSF53187">
    <property type="entry name" value="Zn-dependent exopeptidases"/>
    <property type="match status" value="1"/>
</dbReference>
<dbReference type="PROSITE" id="PS00631">
    <property type="entry name" value="CYTOSOL_AP"/>
    <property type="match status" value="1"/>
</dbReference>
<sequence>MLNVNFVNEASSTNQGLVVFIDEQLKLDSNLIGLDQQHHGLISKTIQNKLQFTGKYGQIKVIPSVIKSGEVRYLIIAGLGNEEKLTEAKIEELGGKILQHATSCKISTIGLKITNRISRFTSQTFASLVASGAFLASYRFDKYRTTLKEAEKFAVESIEIFTDNSTETAKLFEIKKLIAEAVFFTRDISNEPSNIKTPQVYAERIVDRLEPLGVDVDVIGEREMKNLGMGALLGVGQGSQNESKLVVMEYKGGSKDVPTIALVGKGVIFDTGGISLKPSSDMHLMRYDMGGSAAVVGTIIAVAGQKLPVNIVGVVGLVENMLSGNAQRPGDVVTTMSGQTAEVLNTDAEGRLVLADAVWYAQEKFKPKCVIDVATLTGAITIALGNTYAGCFSNNDELADKLIKVGEEVNEKLWRMPLHDEYDAMIHSDIADMANIANVPRAAGSCIAAHFIKRFIKDGVDWAHLDIAGVANSNKASALGPKGAVGYGVRLLEKFIKEYT</sequence>